<accession>P55348</accession>
<evidence type="ECO:0000250" key="1">
    <source>
        <dbReference type="UniProtKB" id="P48449"/>
    </source>
</evidence>
<evidence type="ECO:0000305" key="2"/>
<feature type="chain" id="PRO_0000072652" description="Probable squalene--hopene cyclase">
    <location>
        <begin position="1"/>
        <end position="647"/>
    </location>
</feature>
<feature type="repeat" description="PFTB 1">
    <location>
        <begin position="67"/>
        <end position="108"/>
    </location>
</feature>
<feature type="repeat" description="PFTB 2">
    <location>
        <begin position="413"/>
        <end position="454"/>
    </location>
</feature>
<feature type="repeat" description="PFTB 3">
    <location>
        <begin position="530"/>
        <end position="577"/>
    </location>
</feature>
<feature type="active site" description="Proton donor" evidence="1">
    <location>
        <position position="388"/>
    </location>
</feature>
<reference key="1">
    <citation type="journal article" date="1997" name="Nature">
        <title>Molecular basis of symbiosis between Rhizobium and legumes.</title>
        <authorList>
            <person name="Freiberg C.A."/>
            <person name="Fellay R."/>
            <person name="Bairoch A."/>
            <person name="Broughton W.J."/>
            <person name="Rosenthal A."/>
            <person name="Perret X."/>
        </authorList>
    </citation>
    <scope>NUCLEOTIDE SEQUENCE [LARGE SCALE GENOMIC DNA]</scope>
    <source>
        <strain>NBRC 101917 / NGR234</strain>
    </source>
</reference>
<reference key="2">
    <citation type="journal article" date="2009" name="Appl. Environ. Microbiol.">
        <title>Rhizobium sp. strain NGR234 possesses a remarkable number of secretion systems.</title>
        <authorList>
            <person name="Schmeisser C."/>
            <person name="Liesegang H."/>
            <person name="Krysciak D."/>
            <person name="Bakkou N."/>
            <person name="Le Quere A."/>
            <person name="Wollherr A."/>
            <person name="Heinemeyer I."/>
            <person name="Morgenstern B."/>
            <person name="Pommerening-Roeser A."/>
            <person name="Flores M."/>
            <person name="Palacios R."/>
            <person name="Brenner S."/>
            <person name="Gottschalk G."/>
            <person name="Schmitz R.A."/>
            <person name="Broughton W.J."/>
            <person name="Perret X."/>
            <person name="Strittmatter A.W."/>
            <person name="Streit W.R."/>
        </authorList>
    </citation>
    <scope>NUCLEOTIDE SEQUENCE [LARGE SCALE GENOMIC DNA]</scope>
    <source>
        <strain>NBRC 101917 / NGR234</strain>
    </source>
</reference>
<proteinExistence type="inferred from homology"/>
<organism>
    <name type="scientific">Sinorhizobium fredii (strain NBRC 101917 / NGR234)</name>
    <dbReference type="NCBI Taxonomy" id="394"/>
    <lineage>
        <taxon>Bacteria</taxon>
        <taxon>Pseudomonadati</taxon>
        <taxon>Pseudomonadota</taxon>
        <taxon>Alphaproteobacteria</taxon>
        <taxon>Hyphomicrobiales</taxon>
        <taxon>Rhizobiaceae</taxon>
        <taxon>Sinorhizobium/Ensifer group</taxon>
        <taxon>Sinorhizobium</taxon>
    </lineage>
</organism>
<gene>
    <name type="primary">shc</name>
    <name type="ordered locus">NGR_a00460</name>
    <name type="ORF">y4aA</name>
</gene>
<protein>
    <recommendedName>
        <fullName>Probable squalene--hopene cyclase</fullName>
        <ecNumber>4.2.1.129</ecNumber>
        <ecNumber>5.4.99.17</ecNumber>
    </recommendedName>
    <alternativeName>
        <fullName>Squalene--hopanol cyclase</fullName>
    </alternativeName>
</protein>
<sequence length="647" mass="72130">MNKHSGNRTAIDPAALEMSIASATEALLAYRHADGHWAFELEADSTIPSEYILLRHYLAEPIDVVLEAKIGNYLRRTQGAHGGWPLVHDGPFDMSASVKSYFALKMIGDSVDAAHMVKAREAIRARGGAANSNVLTRFLLALYGVVSWRAVPVLPIEIVLLPIWSPFHLYKISYWARTTIVPLMVLAVLKPRAKNPKGVGIEELFLQDTKSVGMNPKAPHQSWGWFLLFRGIDGILRVIEPHLPKKLRERAIASALAFTEERLNGEDGMGAIYPSMANIVMMYDALGKDDHFPPRAIARRAIDKLLVIGEEEAYCQPCLSPVWDTALTCHALQEVGGANAVAKAKQGLDWLKPRQVLDVKGDWAVKAPNIRPGGWPFQYNNAHYPDLDDTAVVVMAMDRAQRHAGSKEYATAIARGREWIEGMQSRDGGWAAFDVNNLEYYLNNLPFADHGALLDPPTEDVTARCVSMLAQVGEFTQRSKAVAEGIAYLRRTQHAEGSWYGRWGLNYIYGTWSVLCALNAAGIDHQDPMIRKAVEWLVSIQSWDGGWGEDAISYRLDYSGYEQAPSTSSQTAWALLGLMAAGEVEHPAVARGVNYLKNAQTENGLWDEQRYTATGFPRVFYLRYHGYSKFFPLWALARYRNLRSTNV</sequence>
<comment type="function">
    <text>Catalyzes the cyclization of squalene into hopene. Probably part of an operon y4aABCD involved in the synthesis of an isoprenoid compound.</text>
</comment>
<comment type="catalytic activity">
    <reaction>
        <text>squalene = hop-22(29)-ene</text>
        <dbReference type="Rhea" id="RHEA:17637"/>
        <dbReference type="ChEBI" id="CHEBI:4648"/>
        <dbReference type="ChEBI" id="CHEBI:15440"/>
        <dbReference type="EC" id="5.4.99.17"/>
    </reaction>
</comment>
<comment type="catalytic activity">
    <reaction>
        <text>squalene + H2O = hopan-22-ol</text>
        <dbReference type="Rhea" id="RHEA:16561"/>
        <dbReference type="ChEBI" id="CHEBI:15377"/>
        <dbReference type="ChEBI" id="CHEBI:15440"/>
        <dbReference type="ChEBI" id="CHEBI:36484"/>
        <dbReference type="EC" id="4.2.1.129"/>
    </reaction>
</comment>
<comment type="pathway">
    <text>Secondary metabolite biosynthesis; hopanoid biosynthesis.</text>
</comment>
<comment type="similarity">
    <text evidence="2">Belongs to the terpene cyclase/mutase family.</text>
</comment>
<dbReference type="EC" id="4.2.1.129"/>
<dbReference type="EC" id="5.4.99.17"/>
<dbReference type="EMBL" id="U00090">
    <property type="protein sequence ID" value="AAB91964.1"/>
    <property type="molecule type" value="Genomic_DNA"/>
</dbReference>
<dbReference type="RefSeq" id="NP_443761.1">
    <property type="nucleotide sequence ID" value="NC_000914.2"/>
</dbReference>
<dbReference type="SMR" id="P55348"/>
<dbReference type="KEGG" id="rhi:NGR_a00460"/>
<dbReference type="PATRIC" id="fig|394.7.peg.43"/>
<dbReference type="eggNOG" id="COG1657">
    <property type="taxonomic scope" value="Bacteria"/>
</dbReference>
<dbReference type="HOGENOM" id="CLU_019345_0_0_5"/>
<dbReference type="OrthoDB" id="9758578at2"/>
<dbReference type="UniPathway" id="UPA00337"/>
<dbReference type="Proteomes" id="UP000001054">
    <property type="component" value="Plasmid pNGR234a"/>
</dbReference>
<dbReference type="GO" id="GO:0005811">
    <property type="term" value="C:lipid droplet"/>
    <property type="evidence" value="ECO:0007669"/>
    <property type="project" value="InterPro"/>
</dbReference>
<dbReference type="GO" id="GO:0016829">
    <property type="term" value="F:lyase activity"/>
    <property type="evidence" value="ECO:0007669"/>
    <property type="project" value="UniProtKB-KW"/>
</dbReference>
<dbReference type="GO" id="GO:0051007">
    <property type="term" value="F:squalene-hopene cyclase activity"/>
    <property type="evidence" value="ECO:0007669"/>
    <property type="project" value="UniProtKB-EC"/>
</dbReference>
<dbReference type="GO" id="GO:0016104">
    <property type="term" value="P:triterpenoid biosynthetic process"/>
    <property type="evidence" value="ECO:0007669"/>
    <property type="project" value="InterPro"/>
</dbReference>
<dbReference type="CDD" id="cd02892">
    <property type="entry name" value="SQCY_1"/>
    <property type="match status" value="1"/>
</dbReference>
<dbReference type="Gene3D" id="1.50.10.20">
    <property type="match status" value="2"/>
</dbReference>
<dbReference type="InterPro" id="IPR006400">
    <property type="entry name" value="Hopene-cyclase"/>
</dbReference>
<dbReference type="InterPro" id="IPR032696">
    <property type="entry name" value="SQ_cyclase_C"/>
</dbReference>
<dbReference type="InterPro" id="IPR032697">
    <property type="entry name" value="SQ_cyclase_N"/>
</dbReference>
<dbReference type="InterPro" id="IPR018333">
    <property type="entry name" value="Squalene_cyclase"/>
</dbReference>
<dbReference type="InterPro" id="IPR002365">
    <property type="entry name" value="Terpene_synthase_CS"/>
</dbReference>
<dbReference type="InterPro" id="IPR008930">
    <property type="entry name" value="Terpenoid_cyclase/PrenylTrfase"/>
</dbReference>
<dbReference type="NCBIfam" id="TIGR01507">
    <property type="entry name" value="hopene_cyclase"/>
    <property type="match status" value="1"/>
</dbReference>
<dbReference type="NCBIfam" id="TIGR01787">
    <property type="entry name" value="squalene_cyclas"/>
    <property type="match status" value="1"/>
</dbReference>
<dbReference type="PANTHER" id="PTHR11764:SF20">
    <property type="entry name" value="LANOSTEROL SYNTHASE"/>
    <property type="match status" value="1"/>
</dbReference>
<dbReference type="PANTHER" id="PTHR11764">
    <property type="entry name" value="TERPENE CYCLASE/MUTASE FAMILY MEMBER"/>
    <property type="match status" value="1"/>
</dbReference>
<dbReference type="Pfam" id="PF13243">
    <property type="entry name" value="SQHop_cyclase_C"/>
    <property type="match status" value="1"/>
</dbReference>
<dbReference type="Pfam" id="PF13249">
    <property type="entry name" value="SQHop_cyclase_N"/>
    <property type="match status" value="1"/>
</dbReference>
<dbReference type="SFLD" id="SFLDG01016">
    <property type="entry name" value="Prenyltransferase_Like_2"/>
    <property type="match status" value="1"/>
</dbReference>
<dbReference type="SUPFAM" id="SSF48239">
    <property type="entry name" value="Terpenoid cyclases/Protein prenyltransferases"/>
    <property type="match status" value="2"/>
</dbReference>
<dbReference type="PROSITE" id="PS01074">
    <property type="entry name" value="TERPENE_SYNTHASES"/>
    <property type="match status" value="1"/>
</dbReference>
<geneLocation type="plasmid">
    <name>sym pNGR234a</name>
</geneLocation>
<name>SQHC_SINFN</name>
<keyword id="KW-0413">Isomerase</keyword>
<keyword id="KW-0456">Lyase</keyword>
<keyword id="KW-0614">Plasmid</keyword>
<keyword id="KW-1185">Reference proteome</keyword>
<keyword id="KW-0677">Repeat</keyword>